<gene>
    <name type="primary">vapB42</name>
    <name type="ordered locus">MT2830</name>
</gene>
<evidence type="ECO:0000305" key="1"/>
<organism>
    <name type="scientific">Mycobacterium tuberculosis (strain CDC 1551 / Oshkosh)</name>
    <dbReference type="NCBI Taxonomy" id="83331"/>
    <lineage>
        <taxon>Bacteria</taxon>
        <taxon>Bacillati</taxon>
        <taxon>Actinomycetota</taxon>
        <taxon>Actinomycetes</taxon>
        <taxon>Mycobacteriales</taxon>
        <taxon>Mycobacteriaceae</taxon>
        <taxon>Mycobacterium</taxon>
        <taxon>Mycobacterium tuberculosis complex</taxon>
    </lineage>
</organism>
<protein>
    <recommendedName>
        <fullName>Putative antitoxin VapB42</fullName>
    </recommendedName>
</protein>
<proteinExistence type="predicted"/>
<accession>P9WJ18</accession>
<accession>L0TC64</accession>
<accession>O33302</accession>
<accession>Q7D6M7</accession>
<sequence>MSLNIKSQRTVALVRELAARTGTNQTAAVEDAVARRLSELDREDRARAEARRAAAEQTLRDLDKLLSDDDKRLIRRHEVDLYDDSGLPR</sequence>
<keyword id="KW-1185">Reference proteome</keyword>
<keyword id="KW-1277">Toxin-antitoxin system</keyword>
<feature type="chain" id="PRO_0000427907" description="Putative antitoxin VapB42">
    <location>
        <begin position="1"/>
        <end position="89"/>
    </location>
</feature>
<dbReference type="EMBL" id="AE000516">
    <property type="protein sequence ID" value="AAK47149.1"/>
    <property type="molecule type" value="Genomic_DNA"/>
</dbReference>
<dbReference type="PIR" id="G70880">
    <property type="entry name" value="G70880"/>
</dbReference>
<dbReference type="RefSeq" id="WP_003414066.1">
    <property type="nucleotide sequence ID" value="NZ_KK341227.1"/>
</dbReference>
<dbReference type="SMR" id="P9WJ18"/>
<dbReference type="KEGG" id="mtc:MT2830"/>
<dbReference type="PATRIC" id="fig|83331.31.peg.3051"/>
<dbReference type="HOGENOM" id="CLU_165457_3_0_11"/>
<dbReference type="Proteomes" id="UP000001020">
    <property type="component" value="Chromosome"/>
</dbReference>
<dbReference type="InterPro" id="IPR011660">
    <property type="entry name" value="VapB-like"/>
</dbReference>
<dbReference type="Pfam" id="PF07704">
    <property type="entry name" value="PSK_trans_fac"/>
    <property type="match status" value="1"/>
</dbReference>
<reference key="1">
    <citation type="journal article" date="2002" name="J. Bacteriol.">
        <title>Whole-genome comparison of Mycobacterium tuberculosis clinical and laboratory strains.</title>
        <authorList>
            <person name="Fleischmann R.D."/>
            <person name="Alland D."/>
            <person name="Eisen J.A."/>
            <person name="Carpenter L."/>
            <person name="White O."/>
            <person name="Peterson J.D."/>
            <person name="DeBoy R.T."/>
            <person name="Dodson R.J."/>
            <person name="Gwinn M.L."/>
            <person name="Haft D.H."/>
            <person name="Hickey E.K."/>
            <person name="Kolonay J.F."/>
            <person name="Nelson W.C."/>
            <person name="Umayam L.A."/>
            <person name="Ermolaeva M.D."/>
            <person name="Salzberg S.L."/>
            <person name="Delcher A."/>
            <person name="Utterback T.R."/>
            <person name="Weidman J.F."/>
            <person name="Khouri H.M."/>
            <person name="Gill J."/>
            <person name="Mikula A."/>
            <person name="Bishai W."/>
            <person name="Jacobs W.R. Jr."/>
            <person name="Venter J.C."/>
            <person name="Fraser C.M."/>
        </authorList>
    </citation>
    <scope>NUCLEOTIDE SEQUENCE [LARGE SCALE GENOMIC DNA]</scope>
    <source>
        <strain>CDC 1551 / Oshkosh</strain>
    </source>
</reference>
<name>VPB42_MYCTO</name>
<comment type="function">
    <text evidence="1">Possibly the antitoxin component of a type II toxin-antitoxin (TA) system. Its cognate toxin is VapC42 (Potential).</text>
</comment>